<comment type="function">
    <text evidence="1">Involved in iron-sulfur cluster biogenesis. Binds a 4Fe-4S cluster, can transfer this cluster to apoproteins, and thereby intervenes in the maturation of Fe/S proteins. Could also act as a scaffold/chaperone for damaged Fe/S proteins.</text>
</comment>
<comment type="cofactor">
    <cofactor evidence="1">
        <name>[4Fe-4S] cluster</name>
        <dbReference type="ChEBI" id="CHEBI:49883"/>
    </cofactor>
    <text evidence="1">Binds 1 [4Fe-4S] cluster per subunit. The cluster is presumably bound at the interface of two monomers.</text>
</comment>
<comment type="subunit">
    <text evidence="1">Homodimer.</text>
</comment>
<comment type="similarity">
    <text evidence="1">Belongs to the NfuA family.</text>
</comment>
<protein>
    <recommendedName>
        <fullName evidence="1">Fe/S biogenesis protein NfuA</fullName>
    </recommendedName>
</protein>
<name>NFUA_AERHH</name>
<accession>A0KF09</accession>
<reference key="1">
    <citation type="journal article" date="2006" name="J. Bacteriol.">
        <title>Genome sequence of Aeromonas hydrophila ATCC 7966T: jack of all trades.</title>
        <authorList>
            <person name="Seshadri R."/>
            <person name="Joseph S.W."/>
            <person name="Chopra A.K."/>
            <person name="Sha J."/>
            <person name="Shaw J."/>
            <person name="Graf J."/>
            <person name="Haft D.H."/>
            <person name="Wu M."/>
            <person name="Ren Q."/>
            <person name="Rosovitz M.J."/>
            <person name="Madupu R."/>
            <person name="Tallon L."/>
            <person name="Kim M."/>
            <person name="Jin S."/>
            <person name="Vuong H."/>
            <person name="Stine O.C."/>
            <person name="Ali A."/>
            <person name="Horneman A.J."/>
            <person name="Heidelberg J.F."/>
        </authorList>
    </citation>
    <scope>NUCLEOTIDE SEQUENCE [LARGE SCALE GENOMIC DNA]</scope>
    <source>
        <strain>ATCC 7966 / DSM 30187 / BCRC 13018 / CCUG 14551 / JCM 1027 / KCTC 2358 / NCIMB 9240 / NCTC 8049</strain>
    </source>
</reference>
<proteinExistence type="inferred from homology"/>
<gene>
    <name evidence="1" type="primary">nfuA</name>
    <name type="ordered locus">AHA_0297</name>
</gene>
<evidence type="ECO:0000255" key="1">
    <source>
        <dbReference type="HAMAP-Rule" id="MF_01637"/>
    </source>
</evidence>
<keyword id="KW-0004">4Fe-4S</keyword>
<keyword id="KW-0408">Iron</keyword>
<keyword id="KW-0411">Iron-sulfur</keyword>
<keyword id="KW-0479">Metal-binding</keyword>
<keyword id="KW-1185">Reference proteome</keyword>
<organism>
    <name type="scientific">Aeromonas hydrophila subsp. hydrophila (strain ATCC 7966 / DSM 30187 / BCRC 13018 / CCUG 14551 / JCM 1027 / KCTC 2358 / NCIMB 9240 / NCTC 8049)</name>
    <dbReference type="NCBI Taxonomy" id="380703"/>
    <lineage>
        <taxon>Bacteria</taxon>
        <taxon>Pseudomonadati</taxon>
        <taxon>Pseudomonadota</taxon>
        <taxon>Gammaproteobacteria</taxon>
        <taxon>Aeromonadales</taxon>
        <taxon>Aeromonadaceae</taxon>
        <taxon>Aeromonas</taxon>
    </lineage>
</organism>
<feature type="chain" id="PRO_0000292087" description="Fe/S biogenesis protein NfuA">
    <location>
        <begin position="1"/>
        <end position="192"/>
    </location>
</feature>
<feature type="binding site" evidence="1">
    <location>
        <position position="149"/>
    </location>
    <ligand>
        <name>[4Fe-4S] cluster</name>
        <dbReference type="ChEBI" id="CHEBI:49883"/>
    </ligand>
</feature>
<feature type="binding site" evidence="1">
    <location>
        <position position="152"/>
    </location>
    <ligand>
        <name>[4Fe-4S] cluster</name>
        <dbReference type="ChEBI" id="CHEBI:49883"/>
    </ligand>
</feature>
<sequence length="192" mass="20988">MISISDTAQAHFRKLLEKQPDGTNIRVFVVNPGTQNAECGVSYCPPDAVDPEDQHLPFSGFDCLVDPLSAPFLVDATIDFVTDQMGSQLTLKAPNAKMRKVADDAPLIDRIEYVLMSEVNPMLAGHGGKVTLVELTEDKLAILQFGGGCNGCSMVDYTLKEGIEKQLLEKFPGELNGVKDATEHQRGDHSYY</sequence>
<dbReference type="EMBL" id="CP000462">
    <property type="protein sequence ID" value="ABK38584.1"/>
    <property type="molecule type" value="Genomic_DNA"/>
</dbReference>
<dbReference type="RefSeq" id="WP_011704302.1">
    <property type="nucleotide sequence ID" value="NC_008570.1"/>
</dbReference>
<dbReference type="RefSeq" id="YP_854827.1">
    <property type="nucleotide sequence ID" value="NC_008570.1"/>
</dbReference>
<dbReference type="SMR" id="A0KF09"/>
<dbReference type="STRING" id="380703.AHA_0297"/>
<dbReference type="EnsemblBacteria" id="ABK38584">
    <property type="protein sequence ID" value="ABK38584"/>
    <property type="gene ID" value="AHA_0297"/>
</dbReference>
<dbReference type="GeneID" id="92721486"/>
<dbReference type="KEGG" id="aha:AHA_0297"/>
<dbReference type="PATRIC" id="fig|380703.7.peg.285"/>
<dbReference type="eggNOG" id="COG0316">
    <property type="taxonomic scope" value="Bacteria"/>
</dbReference>
<dbReference type="eggNOG" id="COG0694">
    <property type="taxonomic scope" value="Bacteria"/>
</dbReference>
<dbReference type="HOGENOM" id="CLU_094569_0_0_6"/>
<dbReference type="OrthoDB" id="9785450at2"/>
<dbReference type="Proteomes" id="UP000000756">
    <property type="component" value="Chromosome"/>
</dbReference>
<dbReference type="GO" id="GO:0051539">
    <property type="term" value="F:4 iron, 4 sulfur cluster binding"/>
    <property type="evidence" value="ECO:0007669"/>
    <property type="project" value="UniProtKB-UniRule"/>
</dbReference>
<dbReference type="GO" id="GO:0005506">
    <property type="term" value="F:iron ion binding"/>
    <property type="evidence" value="ECO:0007669"/>
    <property type="project" value="InterPro"/>
</dbReference>
<dbReference type="GO" id="GO:0016226">
    <property type="term" value="P:iron-sulfur cluster assembly"/>
    <property type="evidence" value="ECO:0007669"/>
    <property type="project" value="UniProtKB-UniRule"/>
</dbReference>
<dbReference type="GO" id="GO:0051604">
    <property type="term" value="P:protein maturation"/>
    <property type="evidence" value="ECO:0007669"/>
    <property type="project" value="UniProtKB-UniRule"/>
</dbReference>
<dbReference type="Gene3D" id="3.30.300.130">
    <property type="entry name" value="Fe-S cluster assembly (FSCA)"/>
    <property type="match status" value="1"/>
</dbReference>
<dbReference type="Gene3D" id="2.60.300.12">
    <property type="entry name" value="HesB-like domain"/>
    <property type="match status" value="1"/>
</dbReference>
<dbReference type="HAMAP" id="MF_01637">
    <property type="entry name" value="Fe_S_biogen_NfuA"/>
    <property type="match status" value="1"/>
</dbReference>
<dbReference type="InterPro" id="IPR017726">
    <property type="entry name" value="Fe/S_biogenesis_protein_NfuA"/>
</dbReference>
<dbReference type="InterPro" id="IPR000361">
    <property type="entry name" value="FeS_biogenesis"/>
</dbReference>
<dbReference type="InterPro" id="IPR034904">
    <property type="entry name" value="FSCA_dom_sf"/>
</dbReference>
<dbReference type="InterPro" id="IPR035903">
    <property type="entry name" value="HesB-like_dom_sf"/>
</dbReference>
<dbReference type="InterPro" id="IPR001075">
    <property type="entry name" value="NIF_FeS_clus_asmbl_NifU_C"/>
</dbReference>
<dbReference type="NCBIfam" id="NF008392">
    <property type="entry name" value="PRK11190.1"/>
    <property type="match status" value="1"/>
</dbReference>
<dbReference type="NCBIfam" id="TIGR03341">
    <property type="entry name" value="YhgI_GntY"/>
    <property type="match status" value="1"/>
</dbReference>
<dbReference type="PANTHER" id="PTHR11178:SF51">
    <property type="entry name" value="FE_S BIOGENESIS PROTEIN NFUA"/>
    <property type="match status" value="1"/>
</dbReference>
<dbReference type="PANTHER" id="PTHR11178">
    <property type="entry name" value="IRON-SULFUR CLUSTER SCAFFOLD PROTEIN NFU-RELATED"/>
    <property type="match status" value="1"/>
</dbReference>
<dbReference type="Pfam" id="PF01521">
    <property type="entry name" value="Fe-S_biosyn"/>
    <property type="match status" value="1"/>
</dbReference>
<dbReference type="Pfam" id="PF01106">
    <property type="entry name" value="NifU"/>
    <property type="match status" value="1"/>
</dbReference>
<dbReference type="SUPFAM" id="SSF117916">
    <property type="entry name" value="Fe-S cluster assembly (FSCA) domain-like"/>
    <property type="match status" value="1"/>
</dbReference>
<dbReference type="SUPFAM" id="SSF89360">
    <property type="entry name" value="HesB-like domain"/>
    <property type="match status" value="1"/>
</dbReference>